<sequence length="781" mass="86103">MAAALLLLRALRQSPEPGPWRLWAQLSGRSPGLFSGAGGRRPYVVRGTPIGLAAAGGHTPQSLLLRILTPSFEGVSGLLLKRHIVPSAIRLWQLSGSTLYFNTSGLKQKNKDDDKPKGKAPEDDEEERRRKEREDQMYRERLRTLFIIAIVMSLLNSLSTSGGSISWADFVNEMLAKGEVQRVQVVPESDVVEVYLHPGAVVFGRPRLALMYRMQVANIDKFEEKLRAAEDELNIESKDRIPVSYKRTGFFGNALYALGMTAVGLAILWYVFRLAGMTGREGGFSAFNQLKMARFTIVDGKTGKGVSFQDVAGMHEAKLEVREFVDYLKSPERFLQLGAKVPKGALLLGPPGCGKTLLAKAVATEAQVPFLAMAGPEFVEVIGGLGAARVRSLFKEARARAPCIVYIDEIDAVGKKRSTSMSGFSNTEEEQTLNQLLVEMDGMGTADHVIVLASTNRADVLDNALMRPGRLDRHVFIDLPTLQERREIFEQHLKGLKLTQPSSFYSQRLAELTPGFSGADIANICNEAALHAAREGHTSVHTFNFEYAVERVIAGTAKKSKILSKEEQRVVAFHESGHALVGWLLEHTEAVMKVSIAPRTNAALGFSQMLPRDQYLFTKEQLFERMCMALGGRAAEAISFSRVTSGAQDDLRKVTRIAYSMVKQFGMAPSIGPVSFPEAQEGLVGIGRRPFSQGLQQMMDHEARLLVARAYRHTEKVLLDNLDKLQALANALLEKEVINYEDIEALIGPPPHGPKKMIAPQKWIDAEKEKQASGEEEAPAP</sequence>
<gene>
    <name type="primary">Spg7</name>
</gene>
<evidence type="ECO:0000250" key="1">
    <source>
        <dbReference type="UniProtKB" id="Q3ULF4"/>
    </source>
</evidence>
<evidence type="ECO:0000250" key="2">
    <source>
        <dbReference type="UniProtKB" id="Q9UQ90"/>
    </source>
</evidence>
<evidence type="ECO:0000250" key="3">
    <source>
        <dbReference type="UniProtKB" id="Q9WZ49"/>
    </source>
</evidence>
<evidence type="ECO:0000250" key="4">
    <source>
        <dbReference type="UniProtKB" id="Q9Y4W6"/>
    </source>
</evidence>
<evidence type="ECO:0000255" key="5"/>
<evidence type="ECO:0000256" key="6">
    <source>
        <dbReference type="SAM" id="MobiDB-lite"/>
    </source>
</evidence>
<evidence type="ECO:0000303" key="7">
    <source ref="1"/>
</evidence>
<evidence type="ECO:0000305" key="8"/>
<comment type="function">
    <text evidence="1 2 4">Catalytic component of the m-AAA protease, a protease that plays a key role in proteostasis of inner mitochondrial membrane proteins, and which is essential for axonal and neuron development (By similarity). SPG7 possesses both ATPase and protease activities: the ATPase activity is required to unfold substrates, threading them into the internal proteolytic cavity for hydrolysis into small peptide fragments (By similarity). The m-AAA protease exerts a dual role in the mitochondrial inner membrane: it mediates the processing of specific regulatory proteins and ensures protein quality control by degrading misfolded polypeptides (By similarity). Mediates protein maturation of the mitochondrial ribosomal subunit MRPL32/bL32m by catalyzing the cleavage of the presequence of MRPL32/bL32m prior to assembly into the mitochondrial ribosome (By similarity). Acts as a regulator of calcium in neurons by mediating degradation of SMDT1/EMRE before its assembly with the uniporter complex, limiting the availability of SMDT1/EMRE for MCU assembly and promoting efficient assembly of gatekeeper subunits with MCU (By similarity). Also regulates mitochondrial calcium by catalyzing degradation of MCU (By similarity). Plays a role in the formation and regulation of the mitochondrial permeability transition pore (mPTP) and its proteolytic activity is dispensable for this function (By similarity).</text>
</comment>
<comment type="catalytic activity">
    <reaction evidence="4">
        <text>ATP + H2O = ADP + phosphate + H(+)</text>
        <dbReference type="Rhea" id="RHEA:13065"/>
        <dbReference type="ChEBI" id="CHEBI:15377"/>
        <dbReference type="ChEBI" id="CHEBI:15378"/>
        <dbReference type="ChEBI" id="CHEBI:30616"/>
        <dbReference type="ChEBI" id="CHEBI:43474"/>
        <dbReference type="ChEBI" id="CHEBI:456216"/>
    </reaction>
    <physiologicalReaction direction="left-to-right" evidence="4">
        <dbReference type="Rhea" id="RHEA:13066"/>
    </physiologicalReaction>
</comment>
<comment type="cofactor">
    <cofactor evidence="4">
        <name>Zn(2+)</name>
        <dbReference type="ChEBI" id="CHEBI:29105"/>
    </cofactor>
    <text evidence="4">Binds 1 zinc ion per subunit.</text>
</comment>
<comment type="subunit">
    <text evidence="2">Forms heterooligomers with AFG3L2; the m-AAA protease is composed of heterohexamers of AFG3L2 and SPG7. Component of the mitochondrial permeability transition pore complex (mPTPC), at least composed of SPG7, VDAC1 and PPIF. Interacts with MAIP1.</text>
</comment>
<comment type="subcellular location">
    <subcellularLocation>
        <location evidence="2">Mitochondrion inner membrane</location>
        <topology evidence="5">Multi-pass membrane protein</topology>
    </subcellularLocation>
</comment>
<comment type="alternative products">
    <event type="alternative splicing"/>
    <isoform>
        <id>Q7TT47-1</id>
        <name>1</name>
        <sequence type="displayed"/>
    </isoform>
    <isoform>
        <id>Q7TT47-2</id>
        <name>2</name>
        <sequence type="described" ref="VSP_059223"/>
    </isoform>
</comment>
<comment type="PTM">
    <text evidence="1">Upon import into the mitochondrion, the N-terminal transit peptide is cleaved by the mitochondrial-processing peptidase (MPP) to generate an intermediate form which undergoes a second proteolytic cleavage mediated by proteases AFG3L2 removing an additional N-terminal fragment to generate the proteolytically active mature form.</text>
</comment>
<comment type="similarity">
    <text evidence="8">In the N-terminal section; belongs to the AAA ATPase family.</text>
</comment>
<comment type="similarity">
    <text evidence="8">In the C-terminal section; belongs to the peptidase M41 family.</text>
</comment>
<proteinExistence type="evidence at transcript level"/>
<feature type="transit peptide" description="Mitochondrion" evidence="1">
    <location>
        <begin position="1"/>
        <end position="43"/>
    </location>
</feature>
<feature type="propeptide" id="PRO_0000442308" description="Removed in mature form" evidence="1">
    <location>
        <begin position="44"/>
        <end position="105"/>
    </location>
</feature>
<feature type="chain" id="PRO_0000304933" description="Mitochondrial inner membrane m-AAA protease component paraplegin">
    <location>
        <begin position="106"/>
        <end position="781"/>
    </location>
</feature>
<feature type="topological domain" description="Mitochondrial matrix" evidence="8">
    <location>
        <begin position="106"/>
        <end position="144"/>
    </location>
</feature>
<feature type="transmembrane region" description="Helical" evidence="5">
    <location>
        <begin position="145"/>
        <end position="165"/>
    </location>
</feature>
<feature type="topological domain" description="Mitochondrial intermembrane" evidence="8">
    <location>
        <begin position="166"/>
        <end position="248"/>
    </location>
</feature>
<feature type="transmembrane region" description="Helical" evidence="5">
    <location>
        <begin position="249"/>
        <end position="269"/>
    </location>
</feature>
<feature type="topological domain" description="Mitochondrial matrix" evidence="8">
    <location>
        <begin position="270"/>
        <end position="781"/>
    </location>
</feature>
<feature type="region of interest" description="Disordered" evidence="6">
    <location>
        <begin position="105"/>
        <end position="134"/>
    </location>
</feature>
<feature type="region of interest" description="Interaction with PPIF" evidence="2">
    <location>
        <begin position="701"/>
        <end position="781"/>
    </location>
</feature>
<feature type="compositionally biased region" description="Basic and acidic residues" evidence="6">
    <location>
        <begin position="109"/>
        <end position="134"/>
    </location>
</feature>
<feature type="active site" evidence="3">
    <location>
        <position position="575"/>
    </location>
</feature>
<feature type="binding site" evidence="2">
    <location>
        <position position="312"/>
    </location>
    <ligand>
        <name>ATP</name>
        <dbReference type="ChEBI" id="CHEBI:30616"/>
    </ligand>
</feature>
<feature type="binding site" evidence="2">
    <location>
        <position position="352"/>
    </location>
    <ligand>
        <name>ATP</name>
        <dbReference type="ChEBI" id="CHEBI:30616"/>
    </ligand>
</feature>
<feature type="binding site" evidence="2">
    <location>
        <position position="353"/>
    </location>
    <ligand>
        <name>ATP</name>
        <dbReference type="ChEBI" id="CHEBI:30616"/>
    </ligand>
</feature>
<feature type="binding site" evidence="2">
    <location>
        <position position="354"/>
    </location>
    <ligand>
        <name>ATP</name>
        <dbReference type="ChEBI" id="CHEBI:30616"/>
    </ligand>
</feature>
<feature type="binding site" evidence="2">
    <location>
        <position position="355"/>
    </location>
    <ligand>
        <name>ATP</name>
        <dbReference type="ChEBI" id="CHEBI:30616"/>
    </ligand>
</feature>
<feature type="binding site" evidence="2">
    <location>
        <position position="356"/>
    </location>
    <ligand>
        <name>ATP</name>
        <dbReference type="ChEBI" id="CHEBI:30616"/>
    </ligand>
</feature>
<feature type="binding site" evidence="2">
    <location>
        <position position="357"/>
    </location>
    <ligand>
        <name>ATP</name>
        <dbReference type="ChEBI" id="CHEBI:30616"/>
    </ligand>
</feature>
<feature type="binding site" evidence="4">
    <location>
        <position position="574"/>
    </location>
    <ligand>
        <name>Zn(2+)</name>
        <dbReference type="ChEBI" id="CHEBI:29105"/>
        <note>catalytic</note>
    </ligand>
</feature>
<feature type="binding site" evidence="4">
    <location>
        <position position="578"/>
    </location>
    <ligand>
        <name>Zn(2+)</name>
        <dbReference type="ChEBI" id="CHEBI:29105"/>
        <note>catalytic</note>
    </ligand>
</feature>
<feature type="binding site" evidence="4">
    <location>
        <position position="650"/>
    </location>
    <ligand>
        <name>Zn(2+)</name>
        <dbReference type="ChEBI" id="CHEBI:29105"/>
        <note>catalytic</note>
    </ligand>
</feature>
<feature type="modified residue" description="3'-nitrotyrosine" evidence="1">
    <location>
        <position position="505"/>
    </location>
</feature>
<feature type="splice variant" id="VSP_059223" description="In isoform 2." evidence="7">
    <location>
        <begin position="517"/>
        <end position="554"/>
    </location>
</feature>
<reference key="1">
    <citation type="submission" date="2003-04" db="EMBL/GenBank/DDBJ databases">
        <authorList>
            <person name="Shan Y.X."/>
            <person name="Guo Z.K."/>
            <person name="Pan J."/>
            <person name="Geng D.C."/>
            <person name="Yu L."/>
        </authorList>
    </citation>
    <scope>NUCLEOTIDE SEQUENCE [MRNA] (ISOFORM 2)</scope>
</reference>
<reference key="2">
    <citation type="journal article" date="2004" name="Nature">
        <title>Genome sequence of the Brown Norway rat yields insights into mammalian evolution.</title>
        <authorList>
            <person name="Gibbs R.A."/>
            <person name="Weinstock G.M."/>
            <person name="Metzker M.L."/>
            <person name="Muzny D.M."/>
            <person name="Sodergren E.J."/>
            <person name="Scherer S."/>
            <person name="Scott G."/>
            <person name="Steffen D."/>
            <person name="Worley K.C."/>
            <person name="Burch P.E."/>
            <person name="Okwuonu G."/>
            <person name="Hines S."/>
            <person name="Lewis L."/>
            <person name="Deramo C."/>
            <person name="Delgado O."/>
            <person name="Dugan-Rocha S."/>
            <person name="Miner G."/>
            <person name="Morgan M."/>
            <person name="Hawes A."/>
            <person name="Gill R."/>
            <person name="Holt R.A."/>
            <person name="Adams M.D."/>
            <person name="Amanatides P.G."/>
            <person name="Baden-Tillson H."/>
            <person name="Barnstead M."/>
            <person name="Chin S."/>
            <person name="Evans C.A."/>
            <person name="Ferriera S."/>
            <person name="Fosler C."/>
            <person name="Glodek A."/>
            <person name="Gu Z."/>
            <person name="Jennings D."/>
            <person name="Kraft C.L."/>
            <person name="Nguyen T."/>
            <person name="Pfannkoch C.M."/>
            <person name="Sitter C."/>
            <person name="Sutton G.G."/>
            <person name="Venter J.C."/>
            <person name="Woodage T."/>
            <person name="Smith D."/>
            <person name="Lee H.-M."/>
            <person name="Gustafson E."/>
            <person name="Cahill P."/>
            <person name="Kana A."/>
            <person name="Doucette-Stamm L."/>
            <person name="Weinstock K."/>
            <person name="Fechtel K."/>
            <person name="Weiss R.B."/>
            <person name="Dunn D.M."/>
            <person name="Green E.D."/>
            <person name="Blakesley R.W."/>
            <person name="Bouffard G.G."/>
            <person name="De Jong P.J."/>
            <person name="Osoegawa K."/>
            <person name="Zhu B."/>
            <person name="Marra M."/>
            <person name="Schein J."/>
            <person name="Bosdet I."/>
            <person name="Fjell C."/>
            <person name="Jones S."/>
            <person name="Krzywinski M."/>
            <person name="Mathewson C."/>
            <person name="Siddiqui A."/>
            <person name="Wye N."/>
            <person name="McPherson J."/>
            <person name="Zhao S."/>
            <person name="Fraser C.M."/>
            <person name="Shetty J."/>
            <person name="Shatsman S."/>
            <person name="Geer K."/>
            <person name="Chen Y."/>
            <person name="Abramzon S."/>
            <person name="Nierman W.C."/>
            <person name="Havlak P.H."/>
            <person name="Chen R."/>
            <person name="Durbin K.J."/>
            <person name="Egan A."/>
            <person name="Ren Y."/>
            <person name="Song X.-Z."/>
            <person name="Li B."/>
            <person name="Liu Y."/>
            <person name="Qin X."/>
            <person name="Cawley S."/>
            <person name="Cooney A.J."/>
            <person name="D'Souza L.M."/>
            <person name="Martin K."/>
            <person name="Wu J.Q."/>
            <person name="Gonzalez-Garay M.L."/>
            <person name="Jackson A.R."/>
            <person name="Kalafus K.J."/>
            <person name="McLeod M.P."/>
            <person name="Milosavljevic A."/>
            <person name="Virk D."/>
            <person name="Volkov A."/>
            <person name="Wheeler D.A."/>
            <person name="Zhang Z."/>
            <person name="Bailey J.A."/>
            <person name="Eichler E.E."/>
            <person name="Tuzun E."/>
            <person name="Birney E."/>
            <person name="Mongin E."/>
            <person name="Ureta-Vidal A."/>
            <person name="Woodwark C."/>
            <person name="Zdobnov E."/>
            <person name="Bork P."/>
            <person name="Suyama M."/>
            <person name="Torrents D."/>
            <person name="Alexandersson M."/>
            <person name="Trask B.J."/>
            <person name="Young J.M."/>
            <person name="Huang H."/>
            <person name="Wang H."/>
            <person name="Xing H."/>
            <person name="Daniels S."/>
            <person name="Gietzen D."/>
            <person name="Schmidt J."/>
            <person name="Stevens K."/>
            <person name="Vitt U."/>
            <person name="Wingrove J."/>
            <person name="Camara F."/>
            <person name="Mar Alba M."/>
            <person name="Abril J.F."/>
            <person name="Guigo R."/>
            <person name="Smit A."/>
            <person name="Dubchak I."/>
            <person name="Rubin E.M."/>
            <person name="Couronne O."/>
            <person name="Poliakov A."/>
            <person name="Huebner N."/>
            <person name="Ganten D."/>
            <person name="Goesele C."/>
            <person name="Hummel O."/>
            <person name="Kreitler T."/>
            <person name="Lee Y.-A."/>
            <person name="Monti J."/>
            <person name="Schulz H."/>
            <person name="Zimdahl H."/>
            <person name="Himmelbauer H."/>
            <person name="Lehrach H."/>
            <person name="Jacob H.J."/>
            <person name="Bromberg S."/>
            <person name="Gullings-Handley J."/>
            <person name="Jensen-Seaman M.I."/>
            <person name="Kwitek A.E."/>
            <person name="Lazar J."/>
            <person name="Pasko D."/>
            <person name="Tonellato P.J."/>
            <person name="Twigger S."/>
            <person name="Ponting C.P."/>
            <person name="Duarte J.M."/>
            <person name="Rice S."/>
            <person name="Goodstadt L."/>
            <person name="Beatson S.A."/>
            <person name="Emes R.D."/>
            <person name="Winter E.E."/>
            <person name="Webber C."/>
            <person name="Brandt P."/>
            <person name="Nyakatura G."/>
            <person name="Adetobi M."/>
            <person name="Chiaromonte F."/>
            <person name="Elnitski L."/>
            <person name="Eswara P."/>
            <person name="Hardison R.C."/>
            <person name="Hou M."/>
            <person name="Kolbe D."/>
            <person name="Makova K."/>
            <person name="Miller W."/>
            <person name="Nekrutenko A."/>
            <person name="Riemer C."/>
            <person name="Schwartz S."/>
            <person name="Taylor J."/>
            <person name="Yang S."/>
            <person name="Zhang Y."/>
            <person name="Lindpaintner K."/>
            <person name="Andrews T.D."/>
            <person name="Caccamo M."/>
            <person name="Clamp M."/>
            <person name="Clarke L."/>
            <person name="Curwen V."/>
            <person name="Durbin R.M."/>
            <person name="Eyras E."/>
            <person name="Searle S.M."/>
            <person name="Cooper G.M."/>
            <person name="Batzoglou S."/>
            <person name="Brudno M."/>
            <person name="Sidow A."/>
            <person name="Stone E.A."/>
            <person name="Payseur B.A."/>
            <person name="Bourque G."/>
            <person name="Lopez-Otin C."/>
            <person name="Puente X.S."/>
            <person name="Chakrabarti K."/>
            <person name="Chatterji S."/>
            <person name="Dewey C."/>
            <person name="Pachter L."/>
            <person name="Bray N."/>
            <person name="Yap V.B."/>
            <person name="Caspi A."/>
            <person name="Tesler G."/>
            <person name="Pevzner P.A."/>
            <person name="Haussler D."/>
            <person name="Roskin K.M."/>
            <person name="Baertsch R."/>
            <person name="Clawson H."/>
            <person name="Furey T.S."/>
            <person name="Hinrichs A.S."/>
            <person name="Karolchik D."/>
            <person name="Kent W.J."/>
            <person name="Rosenbloom K.R."/>
            <person name="Trumbower H."/>
            <person name="Weirauch M."/>
            <person name="Cooper D.N."/>
            <person name="Stenson P.D."/>
            <person name="Ma B."/>
            <person name="Brent M."/>
            <person name="Arumugam M."/>
            <person name="Shteynberg D."/>
            <person name="Copley R.R."/>
            <person name="Taylor M.S."/>
            <person name="Riethman H."/>
            <person name="Mudunuri U."/>
            <person name="Peterson J."/>
            <person name="Guyer M."/>
            <person name="Felsenfeld A."/>
            <person name="Old S."/>
            <person name="Mockrin S."/>
            <person name="Collins F.S."/>
        </authorList>
    </citation>
    <scope>NUCLEOTIDE SEQUENCE [LARGE SCALE GENOMIC DNA]</scope>
    <source>
        <strain>Brown Norway</strain>
    </source>
</reference>
<reference key="3">
    <citation type="journal article" date="2015" name="Mol. Cell">
        <title>SPG7 is an essential and conserved component of the mitochondrial permeability transition pore.</title>
        <authorList>
            <person name="Shanmughapriya S."/>
            <person name="Rajan S."/>
            <person name="Hoffman N.E."/>
            <person name="Higgins A.M."/>
            <person name="Tomar D."/>
            <person name="Nemani N."/>
            <person name="Hines K.J."/>
            <person name="Smith D.J."/>
            <person name="Eguchi A."/>
            <person name="Vallem S."/>
            <person name="Shaikh F."/>
            <person name="Cheung M."/>
            <person name="Leonard N.J."/>
            <person name="Stolakis R.S."/>
            <person name="Wolfers M.P."/>
            <person name="Ibetti J."/>
            <person name="Chuprun J.K."/>
            <person name="Jog N.R."/>
            <person name="Houser S.R."/>
            <person name="Koch W.J."/>
            <person name="Elrod J.W."/>
            <person name="Madesh M."/>
        </authorList>
    </citation>
    <scope>FUNCTION</scope>
</reference>
<dbReference type="EC" id="3.4.24.-" evidence="1"/>
<dbReference type="EC" id="3.6.-.-" evidence="4"/>
<dbReference type="EMBL" id="AY278739">
    <property type="protein sequence ID" value="AAP35059.1"/>
    <property type="molecule type" value="mRNA"/>
</dbReference>
<dbReference type="EMBL" id="AC119635">
    <property type="status" value="NOT_ANNOTATED_CDS"/>
    <property type="molecule type" value="Genomic_DNA"/>
</dbReference>
<dbReference type="EMBL" id="AC141337">
    <property type="status" value="NOT_ANNOTATED_CDS"/>
    <property type="molecule type" value="Genomic_DNA"/>
</dbReference>
<dbReference type="RefSeq" id="NP_001386039.1">
    <molecule id="Q7TT47-1"/>
    <property type="nucleotide sequence ID" value="NM_001399110.1"/>
</dbReference>
<dbReference type="RefSeq" id="NP_852053.1">
    <property type="nucleotide sequence ID" value="NM_181388.2"/>
</dbReference>
<dbReference type="RefSeq" id="XP_008770841.1">
    <property type="nucleotide sequence ID" value="XM_008772619.2"/>
</dbReference>
<dbReference type="SMR" id="Q7TT47"/>
<dbReference type="FunCoup" id="Q7TT47">
    <property type="interactions" value="1789"/>
</dbReference>
<dbReference type="STRING" id="10116.ENSRNOP00000073276"/>
<dbReference type="MEROPS" id="M41.006"/>
<dbReference type="PhosphoSitePlus" id="Q7TT47"/>
<dbReference type="SwissPalm" id="Q7TT47"/>
<dbReference type="jPOST" id="Q7TT47"/>
<dbReference type="PaxDb" id="10116-ENSRNOP00000048848"/>
<dbReference type="GeneID" id="353231"/>
<dbReference type="KEGG" id="rno:353231"/>
<dbReference type="UCSC" id="RGD:727940">
    <molecule id="Q7TT47-1"/>
    <property type="organism name" value="rat"/>
</dbReference>
<dbReference type="AGR" id="RGD:727940"/>
<dbReference type="CTD" id="6687"/>
<dbReference type="RGD" id="727940">
    <property type="gene designation" value="Spg7"/>
</dbReference>
<dbReference type="VEuPathDB" id="HostDB:ENSRNOG00000015150"/>
<dbReference type="eggNOG" id="KOG0731">
    <property type="taxonomic scope" value="Eukaryota"/>
</dbReference>
<dbReference type="InParanoid" id="Q7TT47"/>
<dbReference type="OrthoDB" id="1413014at2759"/>
<dbReference type="Reactome" id="R-RNO-8949664">
    <property type="pathway name" value="Processing of SMDT1"/>
</dbReference>
<dbReference type="Reactome" id="R-RNO-9837999">
    <property type="pathway name" value="Mitochondrial protein degradation"/>
</dbReference>
<dbReference type="PRO" id="PR:Q7TT47"/>
<dbReference type="Proteomes" id="UP000002494">
    <property type="component" value="Chromosome 19"/>
</dbReference>
<dbReference type="Bgee" id="ENSRNOG00000015150">
    <property type="expression patterns" value="Expressed in skeletal muscle tissue and 20 other cell types or tissues"/>
</dbReference>
<dbReference type="ExpressionAtlas" id="Q7TT47">
    <property type="expression patterns" value="baseline and differential"/>
</dbReference>
<dbReference type="GO" id="GO:1904115">
    <property type="term" value="C:axon cytoplasm"/>
    <property type="evidence" value="ECO:0007669"/>
    <property type="project" value="GOC"/>
</dbReference>
<dbReference type="GO" id="GO:0005745">
    <property type="term" value="C:m-AAA complex"/>
    <property type="evidence" value="ECO:0000266"/>
    <property type="project" value="RGD"/>
</dbReference>
<dbReference type="GO" id="GO:0005743">
    <property type="term" value="C:mitochondrial inner membrane"/>
    <property type="evidence" value="ECO:0000250"/>
    <property type="project" value="UniProtKB"/>
</dbReference>
<dbReference type="GO" id="GO:0005757">
    <property type="term" value="C:mitochondrial permeability transition pore complex"/>
    <property type="evidence" value="ECO:0007669"/>
    <property type="project" value="Ensembl"/>
</dbReference>
<dbReference type="GO" id="GO:0005739">
    <property type="term" value="C:mitochondrion"/>
    <property type="evidence" value="ECO:0000266"/>
    <property type="project" value="RGD"/>
</dbReference>
<dbReference type="GO" id="GO:0005524">
    <property type="term" value="F:ATP binding"/>
    <property type="evidence" value="ECO:0007669"/>
    <property type="project" value="UniProtKB-KW"/>
</dbReference>
<dbReference type="GO" id="GO:0016887">
    <property type="term" value="F:ATP hydrolysis activity"/>
    <property type="evidence" value="ECO:0007669"/>
    <property type="project" value="InterPro"/>
</dbReference>
<dbReference type="GO" id="GO:0004176">
    <property type="term" value="F:ATP-dependent peptidase activity"/>
    <property type="evidence" value="ECO:0007669"/>
    <property type="project" value="InterPro"/>
</dbReference>
<dbReference type="GO" id="GO:0004222">
    <property type="term" value="F:metalloendopeptidase activity"/>
    <property type="evidence" value="ECO:0000250"/>
    <property type="project" value="UniProtKB"/>
</dbReference>
<dbReference type="GO" id="GO:0008270">
    <property type="term" value="F:zinc ion binding"/>
    <property type="evidence" value="ECO:0007669"/>
    <property type="project" value="InterPro"/>
</dbReference>
<dbReference type="GO" id="GO:0008089">
    <property type="term" value="P:anterograde axonal transport"/>
    <property type="evidence" value="ECO:0000266"/>
    <property type="project" value="RGD"/>
</dbReference>
<dbReference type="GO" id="GO:1902686">
    <property type="term" value="P:mitochondrial outer membrane permeabilization involved in programmed cell death"/>
    <property type="evidence" value="ECO:0000315"/>
    <property type="project" value="UniProtKB"/>
</dbReference>
<dbReference type="GO" id="GO:0034982">
    <property type="term" value="P:mitochondrial protein processing"/>
    <property type="evidence" value="ECO:0000318"/>
    <property type="project" value="GO_Central"/>
</dbReference>
<dbReference type="GO" id="GO:0007005">
    <property type="term" value="P:mitochondrion organization"/>
    <property type="evidence" value="ECO:0000266"/>
    <property type="project" value="RGD"/>
</dbReference>
<dbReference type="GO" id="GO:0110097">
    <property type="term" value="P:regulation of calcium import into the mitochondrion"/>
    <property type="evidence" value="ECO:0000250"/>
    <property type="project" value="UniProtKB"/>
</dbReference>
<dbReference type="GO" id="GO:0046902">
    <property type="term" value="P:regulation of mitochondrial membrane permeability"/>
    <property type="evidence" value="ECO:0000315"/>
    <property type="project" value="UniProtKB"/>
</dbReference>
<dbReference type="CDD" id="cd19501">
    <property type="entry name" value="RecA-like_FtsH"/>
    <property type="match status" value="1"/>
</dbReference>
<dbReference type="FunFam" id="3.40.50.300:FF:000277">
    <property type="entry name" value="ATP-dependent zinc metalloprotease FtsH"/>
    <property type="match status" value="1"/>
</dbReference>
<dbReference type="FunFam" id="1.10.8.60:FF:000033">
    <property type="entry name" value="paraplegin isoform X1"/>
    <property type="match status" value="1"/>
</dbReference>
<dbReference type="FunFam" id="1.20.58.760:FF:000004">
    <property type="entry name" value="paraplegin isoform X1"/>
    <property type="match status" value="1"/>
</dbReference>
<dbReference type="FunFam" id="3.40.1690.20:FF:000002">
    <property type="entry name" value="paraplegin isoform X1"/>
    <property type="match status" value="1"/>
</dbReference>
<dbReference type="Gene3D" id="1.10.8.60">
    <property type="match status" value="1"/>
</dbReference>
<dbReference type="Gene3D" id="3.40.1690.20">
    <property type="match status" value="1"/>
</dbReference>
<dbReference type="Gene3D" id="3.40.50.300">
    <property type="entry name" value="P-loop containing nucleotide triphosphate hydrolases"/>
    <property type="match status" value="1"/>
</dbReference>
<dbReference type="Gene3D" id="1.20.58.760">
    <property type="entry name" value="Peptidase M41"/>
    <property type="match status" value="1"/>
</dbReference>
<dbReference type="HAMAP" id="MF_01458">
    <property type="entry name" value="FtsH"/>
    <property type="match status" value="1"/>
</dbReference>
<dbReference type="InterPro" id="IPR003593">
    <property type="entry name" value="AAA+_ATPase"/>
</dbReference>
<dbReference type="InterPro" id="IPR041569">
    <property type="entry name" value="AAA_lid_3"/>
</dbReference>
<dbReference type="InterPro" id="IPR050928">
    <property type="entry name" value="ATP-dep_Zn_Metalloprotease"/>
</dbReference>
<dbReference type="InterPro" id="IPR003959">
    <property type="entry name" value="ATPase_AAA_core"/>
</dbReference>
<dbReference type="InterPro" id="IPR005936">
    <property type="entry name" value="FtsH"/>
</dbReference>
<dbReference type="InterPro" id="IPR027417">
    <property type="entry name" value="P-loop_NTPase"/>
</dbReference>
<dbReference type="InterPro" id="IPR011546">
    <property type="entry name" value="Pept_M41_FtsH_extracell"/>
</dbReference>
<dbReference type="InterPro" id="IPR000642">
    <property type="entry name" value="Peptidase_M41"/>
</dbReference>
<dbReference type="InterPro" id="IPR037219">
    <property type="entry name" value="Peptidase_M41-like"/>
</dbReference>
<dbReference type="NCBIfam" id="TIGR01241">
    <property type="entry name" value="FtsH_fam"/>
    <property type="match status" value="1"/>
</dbReference>
<dbReference type="PANTHER" id="PTHR43655">
    <property type="entry name" value="ATP-DEPENDENT PROTEASE"/>
    <property type="match status" value="1"/>
</dbReference>
<dbReference type="PANTHER" id="PTHR43655:SF8">
    <property type="entry name" value="PARAPLEGIN"/>
    <property type="match status" value="1"/>
</dbReference>
<dbReference type="Pfam" id="PF00004">
    <property type="entry name" value="AAA"/>
    <property type="match status" value="1"/>
</dbReference>
<dbReference type="Pfam" id="PF17862">
    <property type="entry name" value="AAA_lid_3"/>
    <property type="match status" value="1"/>
</dbReference>
<dbReference type="Pfam" id="PF06480">
    <property type="entry name" value="FtsH_ext"/>
    <property type="match status" value="1"/>
</dbReference>
<dbReference type="Pfam" id="PF01434">
    <property type="entry name" value="Peptidase_M41"/>
    <property type="match status" value="1"/>
</dbReference>
<dbReference type="SMART" id="SM00382">
    <property type="entry name" value="AAA"/>
    <property type="match status" value="1"/>
</dbReference>
<dbReference type="SUPFAM" id="SSF140990">
    <property type="entry name" value="FtsH protease domain-like"/>
    <property type="match status" value="1"/>
</dbReference>
<dbReference type="SUPFAM" id="SSF52540">
    <property type="entry name" value="P-loop containing nucleoside triphosphate hydrolases"/>
    <property type="match status" value="1"/>
</dbReference>
<organism>
    <name type="scientific">Rattus norvegicus</name>
    <name type="common">Rat</name>
    <dbReference type="NCBI Taxonomy" id="10116"/>
    <lineage>
        <taxon>Eukaryota</taxon>
        <taxon>Metazoa</taxon>
        <taxon>Chordata</taxon>
        <taxon>Craniata</taxon>
        <taxon>Vertebrata</taxon>
        <taxon>Euteleostomi</taxon>
        <taxon>Mammalia</taxon>
        <taxon>Eutheria</taxon>
        <taxon>Euarchontoglires</taxon>
        <taxon>Glires</taxon>
        <taxon>Rodentia</taxon>
        <taxon>Myomorpha</taxon>
        <taxon>Muroidea</taxon>
        <taxon>Muridae</taxon>
        <taxon>Murinae</taxon>
        <taxon>Rattus</taxon>
    </lineage>
</organism>
<accession>Q7TT47</accession>
<accession>A0A0G2K536</accession>
<keyword id="KW-0025">Alternative splicing</keyword>
<keyword id="KW-0067">ATP-binding</keyword>
<keyword id="KW-0378">Hydrolase</keyword>
<keyword id="KW-0472">Membrane</keyword>
<keyword id="KW-0479">Metal-binding</keyword>
<keyword id="KW-0482">Metalloprotease</keyword>
<keyword id="KW-0496">Mitochondrion</keyword>
<keyword id="KW-0999">Mitochondrion inner membrane</keyword>
<keyword id="KW-0944">Nitration</keyword>
<keyword id="KW-0547">Nucleotide-binding</keyword>
<keyword id="KW-0645">Protease</keyword>
<keyword id="KW-1185">Reference proteome</keyword>
<keyword id="KW-0809">Transit peptide</keyword>
<keyword id="KW-0812">Transmembrane</keyword>
<keyword id="KW-1133">Transmembrane helix</keyword>
<keyword id="KW-0862">Zinc</keyword>
<protein>
    <recommendedName>
        <fullName evidence="8">Mitochondrial inner membrane m-AAA protease component paraplegin</fullName>
        <ecNumber evidence="1">3.4.24.-</ecNumber>
        <ecNumber evidence="4">3.6.-.-</ecNumber>
    </recommendedName>
    <alternativeName>
        <fullName evidence="8">Paraplegin</fullName>
    </alternativeName>
</protein>
<name>SPG7_RAT</name>